<name>PLGA1_TRIAE</name>
<evidence type="ECO:0000250" key="1">
    <source>
        <dbReference type="UniProtKB" id="Q7LZI1"/>
    </source>
</evidence>
<evidence type="ECO:0000255" key="2">
    <source>
        <dbReference type="PROSITE-ProRule" id="PRU00498"/>
    </source>
</evidence>
<evidence type="ECO:0000269" key="3">
    <source>
    </source>
</evidence>
<evidence type="ECO:0000303" key="4">
    <source>
    </source>
</evidence>
<evidence type="ECO:0000305" key="5"/>
<evidence type="ECO:0000305" key="6">
    <source>
    </source>
</evidence>
<evidence type="ECO:0000312" key="7">
    <source>
        <dbReference type="EMBL" id="AFI80891.1"/>
    </source>
</evidence>
<keyword id="KW-1015">Disulfide bond</keyword>
<keyword id="KW-0325">Glycoprotein</keyword>
<keyword id="KW-0378">Hydrolase</keyword>
<keyword id="KW-0593">Phospholipase A2 inhibitor</keyword>
<keyword id="KW-0964">Secreted</keyword>
<dbReference type="EMBL" id="JN975878">
    <property type="protein sequence ID" value="AFI80891.1"/>
    <property type="molecule type" value="mRNA"/>
</dbReference>
<dbReference type="GO" id="GO:0005576">
    <property type="term" value="C:extracellular region"/>
    <property type="evidence" value="ECO:0007669"/>
    <property type="project" value="UniProtKB-SubCell"/>
</dbReference>
<dbReference type="GO" id="GO:0004623">
    <property type="term" value="F:phospholipase A2 activity"/>
    <property type="evidence" value="ECO:0007669"/>
    <property type="project" value="UniProtKB-EC"/>
</dbReference>
<dbReference type="GO" id="GO:0019834">
    <property type="term" value="F:phospholipase A2 inhibitor activity"/>
    <property type="evidence" value="ECO:0007669"/>
    <property type="project" value="UniProtKB-KW"/>
</dbReference>
<dbReference type="Gene3D" id="2.10.60.10">
    <property type="entry name" value="CD59"/>
    <property type="match status" value="1"/>
</dbReference>
<dbReference type="InterPro" id="IPR050918">
    <property type="entry name" value="CNF-like_PLA2_Inhibitor"/>
</dbReference>
<dbReference type="InterPro" id="IPR016054">
    <property type="entry name" value="LY6_UPA_recep-like"/>
</dbReference>
<dbReference type="InterPro" id="IPR016338">
    <property type="entry name" value="PLipase_A2-inh_b-type"/>
</dbReference>
<dbReference type="InterPro" id="IPR004126">
    <property type="entry name" value="PLipase_A2_inh_N"/>
</dbReference>
<dbReference type="InterPro" id="IPR045860">
    <property type="entry name" value="Snake_toxin-like_sf"/>
</dbReference>
<dbReference type="PANTHER" id="PTHR20914">
    <property type="entry name" value="LY6/PLAUR DOMAIN-CONTAINING PROTEIN 8"/>
    <property type="match status" value="1"/>
</dbReference>
<dbReference type="PANTHER" id="PTHR20914:SF30">
    <property type="entry name" value="LY6_PLAUR DOMAIN CONTAINING 9"/>
    <property type="match status" value="1"/>
</dbReference>
<dbReference type="Pfam" id="PF02988">
    <property type="entry name" value="PLA2_inh"/>
    <property type="match status" value="1"/>
</dbReference>
<dbReference type="Pfam" id="PF00021">
    <property type="entry name" value="UPAR_LY6"/>
    <property type="match status" value="1"/>
</dbReference>
<dbReference type="PIRSF" id="PIRSF002023">
    <property type="entry name" value="PLA2_inhib_alpha/gamma"/>
    <property type="match status" value="1"/>
</dbReference>
<dbReference type="SMART" id="SM00134">
    <property type="entry name" value="LU"/>
    <property type="match status" value="1"/>
</dbReference>
<dbReference type="SUPFAM" id="SSF57302">
    <property type="entry name" value="Snake toxin-like"/>
    <property type="match status" value="2"/>
</dbReference>
<reference evidence="7" key="1">
    <citation type="submission" date="2011-10" db="EMBL/GenBank/DDBJ databases">
        <title>Purification, cloning of a novel phospholipase A2 inhibitor from the serum of Chinese Colubridae Sinonatrix annularis.</title>
        <authorList>
            <person name="Huang C."/>
        </authorList>
    </citation>
    <scope>NUCLEOTIDE SEQUENCE [MRNA]</scope>
</reference>
<reference key="2">
    <citation type="journal article" date="2015" name="Toxicon">
        <title>Orthogonal optimization of prokaryotic expression of a natural snake venom phospholipase A2 inhibitor from Sinonatrix annularis.</title>
        <authorList>
            <person name="Le Z."/>
            <person name="Li X."/>
            <person name="Yuan P."/>
            <person name="Liu P."/>
            <person name="Huang C."/>
        </authorList>
    </citation>
    <scope>FUNCTION</scope>
    <scope>RECOMBINANT EXPRESSION</scope>
</reference>
<proteinExistence type="evidence at transcript level"/>
<accession>I6PG79</accession>
<protein>
    <recommendedName>
        <fullName evidence="4 5">Phospholipase A2 inhibitor gamma subunit A1</fullName>
    </recommendedName>
    <alternativeName>
        <fullName evidence="4 5">PLI-gamma A1</fullName>
    </alternativeName>
    <alternativeName>
        <fullName evidence="5">gamma-PLI A1</fullName>
    </alternativeName>
</protein>
<comment type="function">
    <text evidence="3">Phospholipase A2 (PA2) inhibitor. Inhibits the enzymatic activity of PA2 of Deinagkistrodon acutus. Also shows a wide anti-hemorrhage activities to D.acutus, Naja atra and Agkistrodon halys venom. The native protein is more potent than the recombinant one.</text>
</comment>
<comment type="subunit">
    <text evidence="5">Heterodimer of subunit A and subunit B.</text>
</comment>
<comment type="subcellular location">
    <subcellularLocation>
        <location evidence="6">Secreted</location>
    </subcellularLocation>
    <text evidence="6">Secreted in blood plasma.</text>
</comment>
<comment type="tissue specificity">
    <text evidence="6">Expressed by the liver.</text>
</comment>
<comment type="similarity">
    <text evidence="5">Belongs to the CNF-like-inhibitor family.</text>
</comment>
<comment type="caution">
    <text evidence="5">Two phospholipase A2 inhibitor gamma subunit A that have only 75% identities have been described by the group of Huang. They are shown in UniProt as subunit A1 (AC I6PG79) and subunit A2 (AC P0DQX3).</text>
</comment>
<sequence>RSCEICHNVGNDCDYDYVQECDSPEDQCGTVMLEGSLAPFSVRTIHRNCFSSSLCKLEHFDVNTGNGAYLRGRIHCCDQQKCEGRPFPGLPLSYPNGYVCPGVLRGLFSDSSESEAACKGDETKCITIVGYRKERFLGDIAYNIKGCVSSCPELILSNRTHEERRNELIKVECRDAAKTTPSE</sequence>
<organism>
    <name type="scientific">Trimerodytes annularis</name>
    <name type="common">Red-bellied annulate keelback</name>
    <name type="synonym">Tropidonotus annularis</name>
    <dbReference type="NCBI Taxonomy" id="2678873"/>
    <lineage>
        <taxon>Eukaryota</taxon>
        <taxon>Metazoa</taxon>
        <taxon>Chordata</taxon>
        <taxon>Craniata</taxon>
        <taxon>Vertebrata</taxon>
        <taxon>Euteleostomi</taxon>
        <taxon>Lepidosauria</taxon>
        <taxon>Squamata</taxon>
        <taxon>Bifurcata</taxon>
        <taxon>Unidentata</taxon>
        <taxon>Episquamata</taxon>
        <taxon>Toxicofera</taxon>
        <taxon>Serpentes</taxon>
        <taxon>Colubroidea</taxon>
        <taxon>Colubridae</taxon>
        <taxon>Natricinae</taxon>
        <taxon>Trimerodytes</taxon>
    </lineage>
</organism>
<feature type="chain" id="PRO_0000457573" description="Phospholipase A2 inhibitor gamma subunit A1">
    <location>
        <begin position="1"/>
        <end position="183"/>
    </location>
</feature>
<feature type="glycosylation site" description="N-linked (GlcNAc...) asparagine" evidence="2">
    <location>
        <position position="158"/>
    </location>
</feature>
<feature type="disulfide bond" evidence="1">
    <location>
        <begin position="3"/>
        <end position="28"/>
    </location>
</feature>
<feature type="disulfide bond" evidence="1">
    <location>
        <begin position="6"/>
        <end position="13"/>
    </location>
</feature>
<feature type="disulfide bond" evidence="1">
    <location>
        <begin position="21"/>
        <end position="49"/>
    </location>
</feature>
<feature type="disulfide bond" evidence="1">
    <location>
        <begin position="55"/>
        <end position="76"/>
    </location>
</feature>
<feature type="disulfide bond" evidence="1">
    <location>
        <begin position="77"/>
        <end position="82"/>
    </location>
</feature>
<feature type="disulfide bond" evidence="1">
    <location>
        <begin position="100"/>
        <end position="125"/>
    </location>
</feature>
<feature type="disulfide bond" evidence="1">
    <location>
        <begin position="118"/>
        <end position="147"/>
    </location>
</feature>
<feature type="disulfide bond" evidence="1">
    <location>
        <begin position="151"/>
        <end position="173"/>
    </location>
</feature>